<sequence length="295" mass="31860">MSRILTHVPGRTVNRSYALPALVGSAAGRLSGNHSHGREAYIALPQWACSRQPSTPPLQTPGRINALWSLRPVLPMPGRGCQLLRLGGRWLSVVCCRNGSMNLVVWAEGNGVARVIAYRWLRVGRLPVPARRVGRVILVDEPAGQPGRWGRTAVCARLSSADQKVDLDRQVVGVTAWATAEQIPVGKVVTEVGSALYGRRRTFLTLLGDPTVRRIVMKRRDRLGRFGFECVQAVLAADGRELVVVDSADVDDDVVGDITEILTSICARLYGKRAAGNRAARAVAAAARAGGHEAR</sequence>
<reference key="1">
    <citation type="journal article" date="2002" name="J. Bacteriol.">
        <title>Whole-genome comparison of Mycobacterium tuberculosis clinical and laboratory strains.</title>
        <authorList>
            <person name="Fleischmann R.D."/>
            <person name="Alland D."/>
            <person name="Eisen J.A."/>
            <person name="Carpenter L."/>
            <person name="White O."/>
            <person name="Peterson J.D."/>
            <person name="DeBoy R.T."/>
            <person name="Dodson R.J."/>
            <person name="Gwinn M.L."/>
            <person name="Haft D.H."/>
            <person name="Hickey E.K."/>
            <person name="Kolonay J.F."/>
            <person name="Nelson W.C."/>
            <person name="Umayam L.A."/>
            <person name="Ermolaeva M.D."/>
            <person name="Salzberg S.L."/>
            <person name="Delcher A."/>
            <person name="Utterback T.R."/>
            <person name="Weidman J.F."/>
            <person name="Khouri H.M."/>
            <person name="Gill J."/>
            <person name="Mikula A."/>
            <person name="Bishai W."/>
            <person name="Jacobs W.R. Jr."/>
            <person name="Venter J.C."/>
            <person name="Fraser C.M."/>
        </authorList>
    </citation>
    <scope>NUCLEOTIDE SEQUENCE [LARGE SCALE GENOMIC DNA]</scope>
    <source>
        <strain>CDC 1551 / Oshkosh</strain>
    </source>
</reference>
<evidence type="ECO:0000255" key="1">
    <source>
        <dbReference type="PROSITE-ProRule" id="PRU01072"/>
    </source>
</evidence>
<accession>P9WL34</accession>
<accession>L0TDN5</accession>
<accession>P65045</accession>
<accession>Q10831</accession>
<organism>
    <name type="scientific">Mycobacterium tuberculosis (strain CDC 1551 / Oshkosh)</name>
    <dbReference type="NCBI Taxonomy" id="83331"/>
    <lineage>
        <taxon>Bacteria</taxon>
        <taxon>Bacillati</taxon>
        <taxon>Actinomycetota</taxon>
        <taxon>Actinomycetes</taxon>
        <taxon>Mycobacteriales</taxon>
        <taxon>Mycobacteriaceae</taxon>
        <taxon>Mycobacterium</taxon>
        <taxon>Mycobacterium tuberculosis complex</taxon>
    </lineage>
</organism>
<gene>
    <name type="ordered locus">MT2954</name>
</gene>
<name>Y2886_MYCTO</name>
<protein>
    <recommendedName>
        <fullName>Uncharacterized protein MT2954</fullName>
    </recommendedName>
</protein>
<keyword id="KW-1185">Reference proteome</keyword>
<dbReference type="EMBL" id="AE000516">
    <property type="protein sequence ID" value="AAK47279.1"/>
    <property type="molecule type" value="Genomic_DNA"/>
</dbReference>
<dbReference type="PIR" id="A70925">
    <property type="entry name" value="A70925"/>
</dbReference>
<dbReference type="SMR" id="P9WL34"/>
<dbReference type="KEGG" id="mtc:MT2954"/>
<dbReference type="PATRIC" id="fig|83331.31.peg.3191"/>
<dbReference type="HOGENOM" id="CLU_082093_1_0_11"/>
<dbReference type="Proteomes" id="UP000001020">
    <property type="component" value="Chromosome"/>
</dbReference>
<dbReference type="GO" id="GO:0003677">
    <property type="term" value="F:DNA binding"/>
    <property type="evidence" value="ECO:0007669"/>
    <property type="project" value="InterPro"/>
</dbReference>
<dbReference type="GO" id="GO:0000150">
    <property type="term" value="F:DNA strand exchange activity"/>
    <property type="evidence" value="ECO:0007669"/>
    <property type="project" value="InterPro"/>
</dbReference>
<dbReference type="FunFam" id="3.40.50.1390:FF:000002">
    <property type="entry name" value="ORF1 in transposon ISC1904"/>
    <property type="match status" value="1"/>
</dbReference>
<dbReference type="Gene3D" id="3.40.50.1390">
    <property type="entry name" value="Resolvase, N-terminal catalytic domain"/>
    <property type="match status" value="1"/>
</dbReference>
<dbReference type="InterPro" id="IPR051491">
    <property type="entry name" value="Recombinase/Transposase-rel"/>
</dbReference>
<dbReference type="InterPro" id="IPR006119">
    <property type="entry name" value="Resolv_N"/>
</dbReference>
<dbReference type="InterPro" id="IPR036162">
    <property type="entry name" value="Resolvase-like_N_sf"/>
</dbReference>
<dbReference type="InterPro" id="IPR048046">
    <property type="entry name" value="Transpos_IS607"/>
</dbReference>
<dbReference type="NCBIfam" id="NF033518">
    <property type="entry name" value="transpos_IS607"/>
    <property type="match status" value="1"/>
</dbReference>
<dbReference type="PANTHER" id="PTHR36172">
    <property type="match status" value="1"/>
</dbReference>
<dbReference type="PANTHER" id="PTHR36172:SF1">
    <property type="entry name" value="RESOLVASE-RELATED"/>
    <property type="match status" value="1"/>
</dbReference>
<dbReference type="Pfam" id="PF00239">
    <property type="entry name" value="Resolvase"/>
    <property type="match status" value="1"/>
</dbReference>
<dbReference type="SMART" id="SM00857">
    <property type="entry name" value="Resolvase"/>
    <property type="match status" value="1"/>
</dbReference>
<dbReference type="SUPFAM" id="SSF53041">
    <property type="entry name" value="Resolvase-like"/>
    <property type="match status" value="1"/>
</dbReference>
<dbReference type="PROSITE" id="PS51736">
    <property type="entry name" value="RECOMBINASES_3"/>
    <property type="match status" value="1"/>
</dbReference>
<proteinExistence type="predicted"/>
<feature type="chain" id="PRO_0000427548" description="Uncharacterized protein MT2954">
    <location>
        <begin position="1"/>
        <end position="295"/>
    </location>
</feature>
<feature type="domain" description="Resolvase/invertase-type recombinase catalytic" evidence="1">
    <location>
        <begin position="151"/>
        <end position="290"/>
    </location>
</feature>
<feature type="active site" description="O-(5'-phospho-DNA)-serine intermediate" evidence="1">
    <location>
        <position position="159"/>
    </location>
</feature>